<evidence type="ECO:0000255" key="1">
    <source>
        <dbReference type="HAMAP-Rule" id="MF_00003"/>
    </source>
</evidence>
<gene>
    <name evidence="1" type="primary">rbfA</name>
    <name type="ordered locus">PA4743</name>
</gene>
<accession>Q9HV56</accession>
<comment type="function">
    <text evidence="1">One of several proteins that assist in the late maturation steps of the functional core of the 30S ribosomal subunit. Associates with free 30S ribosomal subunits (but not with 30S subunits that are part of 70S ribosomes or polysomes). Required for efficient processing of 16S rRNA. May interact with the 5'-terminal helix region of 16S rRNA.</text>
</comment>
<comment type="subunit">
    <text evidence="1">Monomer. Binds 30S ribosomal subunits, but not 50S ribosomal subunits or 70S ribosomes.</text>
</comment>
<comment type="subcellular location">
    <subcellularLocation>
        <location evidence="1">Cytoplasm</location>
    </subcellularLocation>
</comment>
<comment type="similarity">
    <text evidence="1">Belongs to the RbfA family.</text>
</comment>
<keyword id="KW-0963">Cytoplasm</keyword>
<keyword id="KW-1185">Reference proteome</keyword>
<keyword id="KW-0690">Ribosome biogenesis</keyword>
<proteinExistence type="inferred from homology"/>
<dbReference type="EMBL" id="AE004091">
    <property type="protein sequence ID" value="AAG08129.1"/>
    <property type="molecule type" value="Genomic_DNA"/>
</dbReference>
<dbReference type="PIR" id="F83052">
    <property type="entry name" value="F83052"/>
</dbReference>
<dbReference type="RefSeq" id="NP_253431.1">
    <property type="nucleotide sequence ID" value="NC_002516.2"/>
</dbReference>
<dbReference type="RefSeq" id="WP_003095188.1">
    <property type="nucleotide sequence ID" value="NZ_QZGE01000018.1"/>
</dbReference>
<dbReference type="SMR" id="Q9HV56"/>
<dbReference type="FunCoup" id="Q9HV56">
    <property type="interactions" value="543"/>
</dbReference>
<dbReference type="STRING" id="208964.PA4743"/>
<dbReference type="PaxDb" id="208964-PA4743"/>
<dbReference type="DNASU" id="881688"/>
<dbReference type="GeneID" id="881688"/>
<dbReference type="KEGG" id="pae:PA4743"/>
<dbReference type="PATRIC" id="fig|208964.12.peg.4969"/>
<dbReference type="PseudoCAP" id="PA4743"/>
<dbReference type="HOGENOM" id="CLU_089475_5_0_6"/>
<dbReference type="InParanoid" id="Q9HV56"/>
<dbReference type="OrthoDB" id="307788at2"/>
<dbReference type="PhylomeDB" id="Q9HV56"/>
<dbReference type="BioCyc" id="PAER208964:G1FZ6-4853-MONOMER"/>
<dbReference type="Proteomes" id="UP000002438">
    <property type="component" value="Chromosome"/>
</dbReference>
<dbReference type="GO" id="GO:0005829">
    <property type="term" value="C:cytosol"/>
    <property type="evidence" value="ECO:0000318"/>
    <property type="project" value="GO_Central"/>
</dbReference>
<dbReference type="GO" id="GO:0043024">
    <property type="term" value="F:ribosomal small subunit binding"/>
    <property type="evidence" value="ECO:0000318"/>
    <property type="project" value="GO_Central"/>
</dbReference>
<dbReference type="GO" id="GO:0030490">
    <property type="term" value="P:maturation of SSU-rRNA"/>
    <property type="evidence" value="ECO:0007669"/>
    <property type="project" value="UniProtKB-UniRule"/>
</dbReference>
<dbReference type="GO" id="GO:0042254">
    <property type="term" value="P:ribosome biogenesis"/>
    <property type="evidence" value="ECO:0000318"/>
    <property type="project" value="GO_Central"/>
</dbReference>
<dbReference type="FunFam" id="3.30.300.20:FF:000029">
    <property type="entry name" value="Ribosome-binding factor A"/>
    <property type="match status" value="1"/>
</dbReference>
<dbReference type="Gene3D" id="3.30.300.20">
    <property type="match status" value="1"/>
</dbReference>
<dbReference type="HAMAP" id="MF_00003">
    <property type="entry name" value="RbfA"/>
    <property type="match status" value="1"/>
</dbReference>
<dbReference type="InterPro" id="IPR015946">
    <property type="entry name" value="KH_dom-like_a/b"/>
</dbReference>
<dbReference type="InterPro" id="IPR000238">
    <property type="entry name" value="RbfA"/>
</dbReference>
<dbReference type="InterPro" id="IPR023799">
    <property type="entry name" value="RbfA_dom_sf"/>
</dbReference>
<dbReference type="InterPro" id="IPR020053">
    <property type="entry name" value="Ribosome-bd_factorA_CS"/>
</dbReference>
<dbReference type="NCBIfam" id="TIGR00082">
    <property type="entry name" value="rbfA"/>
    <property type="match status" value="1"/>
</dbReference>
<dbReference type="PANTHER" id="PTHR33515">
    <property type="entry name" value="RIBOSOME-BINDING FACTOR A, CHLOROPLASTIC-RELATED"/>
    <property type="match status" value="1"/>
</dbReference>
<dbReference type="PANTHER" id="PTHR33515:SF1">
    <property type="entry name" value="RIBOSOME-BINDING FACTOR A, CHLOROPLASTIC-RELATED"/>
    <property type="match status" value="1"/>
</dbReference>
<dbReference type="Pfam" id="PF02033">
    <property type="entry name" value="RBFA"/>
    <property type="match status" value="1"/>
</dbReference>
<dbReference type="SUPFAM" id="SSF89919">
    <property type="entry name" value="Ribosome-binding factor A, RbfA"/>
    <property type="match status" value="1"/>
</dbReference>
<dbReference type="PROSITE" id="PS01319">
    <property type="entry name" value="RBFA"/>
    <property type="match status" value="1"/>
</dbReference>
<protein>
    <recommendedName>
        <fullName evidence="1">Ribosome-binding factor A</fullName>
    </recommendedName>
</protein>
<feature type="chain" id="PRO_0000102713" description="Ribosome-binding factor A">
    <location>
        <begin position="1"/>
        <end position="129"/>
    </location>
</feature>
<organism>
    <name type="scientific">Pseudomonas aeruginosa (strain ATCC 15692 / DSM 22644 / CIP 104116 / JCM 14847 / LMG 12228 / 1C / PRS 101 / PAO1)</name>
    <dbReference type="NCBI Taxonomy" id="208964"/>
    <lineage>
        <taxon>Bacteria</taxon>
        <taxon>Pseudomonadati</taxon>
        <taxon>Pseudomonadota</taxon>
        <taxon>Gammaproteobacteria</taxon>
        <taxon>Pseudomonadales</taxon>
        <taxon>Pseudomonadaceae</taxon>
        <taxon>Pseudomonas</taxon>
    </lineage>
</organism>
<reference key="1">
    <citation type="journal article" date="2000" name="Nature">
        <title>Complete genome sequence of Pseudomonas aeruginosa PAO1, an opportunistic pathogen.</title>
        <authorList>
            <person name="Stover C.K."/>
            <person name="Pham X.-Q.T."/>
            <person name="Erwin A.L."/>
            <person name="Mizoguchi S.D."/>
            <person name="Warrener P."/>
            <person name="Hickey M.J."/>
            <person name="Brinkman F.S.L."/>
            <person name="Hufnagle W.O."/>
            <person name="Kowalik D.J."/>
            <person name="Lagrou M."/>
            <person name="Garber R.L."/>
            <person name="Goltry L."/>
            <person name="Tolentino E."/>
            <person name="Westbrock-Wadman S."/>
            <person name="Yuan Y."/>
            <person name="Brody L.L."/>
            <person name="Coulter S.N."/>
            <person name="Folger K.R."/>
            <person name="Kas A."/>
            <person name="Larbig K."/>
            <person name="Lim R.M."/>
            <person name="Smith K.A."/>
            <person name="Spencer D.H."/>
            <person name="Wong G.K.-S."/>
            <person name="Wu Z."/>
            <person name="Paulsen I.T."/>
            <person name="Reizer J."/>
            <person name="Saier M.H. Jr."/>
            <person name="Hancock R.E.W."/>
            <person name="Lory S."/>
            <person name="Olson M.V."/>
        </authorList>
    </citation>
    <scope>NUCLEOTIDE SEQUENCE [LARGE SCALE GENOMIC DNA]</scope>
    <source>
        <strain>ATCC 15692 / DSM 22644 / CIP 104116 / JCM 14847 / LMG 12228 / 1C / PRS 101 / PAO1</strain>
    </source>
</reference>
<name>RBFA_PSEAE</name>
<sequence>MAKDYSRTQRIGDQMQRELAQLIQREIKDPRLGLVTITGVEVSRDVAHAKVFITVMGQDDAGKIALNMEILNDAAGYLRMLLGKSMKLRSVPQLHFHYDESIRRGAELSALIERAVAEDGRRHGDETED</sequence>